<sequence>MDSTNVTTDPNLRPRRGGLQRRFAIIEPALQPDTVTDKIGKDGRVVSLKSNYANFNIKVEGPFYMYDVVMENKSIRTKLELLLAYANSKNNGQPFCFDGRRLFTTSKWHSDEDTENLVIKDVEISIRLLTTFLKNSEEYYQMINIVFNNIQIFMGQEKIGRQFFLGSNCESGGIREGPSFFKMDNFKILGGYSTTITRGTNENGTASTLLYLERINRVLNENNVVSVYRRDQIDQLIGRDIITKYNNKTYRISDIKEMDVNDEVQLGDKKISYLNYFKQRYNINLKNDKQPFVISRVKRSMVRPKEKTENEPEGPTETDQSLSIPGELCYLCGFSDSERSNINLQKNLGTVLKREPRERLNDIRDFCKWTGAGKSKDYMKSWGMCIEEQPITIRGRELAPVDIFSNEVKINTKIPDDWKFGEIKFDVPKGTAHRFGVLVVDRNPSHFNNFIEDVKREIGRLRINYTMDSISSCRSNEVEDALTDFIRVSKVHMALVFIPDDKVYAKVKNFTMSTGLLTQCVTQRNGSNRDDRRRKTVADKSVMQMFSKLGYDPWGINLKMAPTMIVGLDTFHSKTGKRSVQASVFSISAKFSQYISFVNSSKGKNEFHENLGKNFLTALTTFQNKFNTMPLRLIIYRDGVGDSQLAFTKKFETDAVMKMIEKIYENQTLPQIIYVVVKKRISVKFFKDGANPNPGTVVDEKIVKPNFYEFYLVSQKTTKGTASPTNYNVLMDTKFTNKKTNEVSVMSPSVLQQITYSLTHLYFNWMGTIRVPVPTHYAHRLAELVGKIHRGVTPPAINDRIRERLFYL</sequence>
<name>PIWI1_SCHMD</name>
<organism>
    <name type="scientific">Schmidtea mediterranea</name>
    <name type="common">Freshwater planarian flatworm</name>
    <dbReference type="NCBI Taxonomy" id="79327"/>
    <lineage>
        <taxon>Eukaryota</taxon>
        <taxon>Metazoa</taxon>
        <taxon>Spiralia</taxon>
        <taxon>Lophotrochozoa</taxon>
        <taxon>Platyhelminthes</taxon>
        <taxon>Rhabditophora</taxon>
        <taxon>Seriata</taxon>
        <taxon>Tricladida</taxon>
        <taxon>Continenticola</taxon>
        <taxon>Geoplanoidea</taxon>
        <taxon>Dugesiidae</taxon>
        <taxon>Schmidtea</taxon>
    </lineage>
</organism>
<gene>
    <name type="primary">wi-1</name>
</gene>
<dbReference type="EMBL" id="DQ186985">
    <property type="protein sequence ID" value="ABB77337.1"/>
    <property type="molecule type" value="mRNA"/>
</dbReference>
<dbReference type="SMR" id="Q2Q5Y9"/>
<dbReference type="GO" id="GO:0003723">
    <property type="term" value="F:RNA binding"/>
    <property type="evidence" value="ECO:0007669"/>
    <property type="project" value="InterPro"/>
</dbReference>
<dbReference type="GO" id="GO:0031047">
    <property type="term" value="P:regulatory ncRNA-mediated gene silencing"/>
    <property type="evidence" value="ECO:0007669"/>
    <property type="project" value="UniProtKB-KW"/>
</dbReference>
<dbReference type="CDD" id="cd04658">
    <property type="entry name" value="Piwi_piwi-like_Euk"/>
    <property type="match status" value="1"/>
</dbReference>
<dbReference type="Gene3D" id="3.40.50.2300">
    <property type="match status" value="1"/>
</dbReference>
<dbReference type="Gene3D" id="2.170.260.10">
    <property type="entry name" value="paz domain"/>
    <property type="match status" value="1"/>
</dbReference>
<dbReference type="Gene3D" id="3.30.420.10">
    <property type="entry name" value="Ribonuclease H-like superfamily/Ribonuclease H"/>
    <property type="match status" value="1"/>
</dbReference>
<dbReference type="InterPro" id="IPR003100">
    <property type="entry name" value="PAZ_dom"/>
</dbReference>
<dbReference type="InterPro" id="IPR036085">
    <property type="entry name" value="PAZ_dom_sf"/>
</dbReference>
<dbReference type="InterPro" id="IPR003165">
    <property type="entry name" value="Piwi"/>
</dbReference>
<dbReference type="InterPro" id="IPR012337">
    <property type="entry name" value="RNaseH-like_sf"/>
</dbReference>
<dbReference type="InterPro" id="IPR036397">
    <property type="entry name" value="RNaseH_sf"/>
</dbReference>
<dbReference type="PANTHER" id="PTHR22891">
    <property type="entry name" value="EUKARYOTIC TRANSLATION INITIATION FACTOR 2C"/>
    <property type="match status" value="1"/>
</dbReference>
<dbReference type="Pfam" id="PF02170">
    <property type="entry name" value="PAZ"/>
    <property type="match status" value="1"/>
</dbReference>
<dbReference type="Pfam" id="PF02171">
    <property type="entry name" value="Piwi"/>
    <property type="match status" value="1"/>
</dbReference>
<dbReference type="SMART" id="SM00949">
    <property type="entry name" value="PAZ"/>
    <property type="match status" value="1"/>
</dbReference>
<dbReference type="SMART" id="SM00950">
    <property type="entry name" value="Piwi"/>
    <property type="match status" value="1"/>
</dbReference>
<dbReference type="SUPFAM" id="SSF101690">
    <property type="entry name" value="PAZ domain"/>
    <property type="match status" value="1"/>
</dbReference>
<dbReference type="SUPFAM" id="SSF53098">
    <property type="entry name" value="Ribonuclease H-like"/>
    <property type="match status" value="1"/>
</dbReference>
<dbReference type="PROSITE" id="PS50821">
    <property type="entry name" value="PAZ"/>
    <property type="match status" value="1"/>
</dbReference>
<dbReference type="PROSITE" id="PS50822">
    <property type="entry name" value="PIWI"/>
    <property type="match status" value="1"/>
</dbReference>
<reference key="1">
    <citation type="journal article" date="2005" name="Science">
        <title>SMEDWI-2 is a PIWI-like protein that regulates planarian stem cells.</title>
        <authorList>
            <person name="Reddien P.W."/>
            <person name="Oviedo N.J."/>
            <person name="Jennings J.R."/>
            <person name="Jenkin J.C."/>
            <person name="Sanchez Alvarado A."/>
        </authorList>
    </citation>
    <scope>NUCLEOTIDE SEQUENCE [MRNA]</scope>
    <scope>TISSUE SPECIFICITY</scope>
    <source>
        <strain>CIW4</strain>
    </source>
</reference>
<protein>
    <recommendedName>
        <fullName>Piwi-like protein 1</fullName>
    </recommendedName>
    <alternativeName>
        <fullName>SMEDWI-1</fullName>
    </alternativeName>
</protein>
<evidence type="ECO:0000255" key="1">
    <source>
        <dbReference type="PROSITE-ProRule" id="PRU00142"/>
    </source>
</evidence>
<evidence type="ECO:0000255" key="2">
    <source>
        <dbReference type="PROSITE-ProRule" id="PRU00150"/>
    </source>
</evidence>
<evidence type="ECO:0000256" key="3">
    <source>
        <dbReference type="SAM" id="MobiDB-lite"/>
    </source>
</evidence>
<evidence type="ECO:0000269" key="4">
    <source>
    </source>
</evidence>
<evidence type="ECO:0000305" key="5"/>
<keyword id="KW-0943">RNA-mediated gene silencing</keyword>
<comment type="tissue specificity">
    <text evidence="4">Expressed in dividing adult somatic stem cells (neoblasts).</text>
</comment>
<comment type="similarity">
    <text evidence="5">Belongs to the argonaute family. Piwi subfamily.</text>
</comment>
<proteinExistence type="evidence at transcript level"/>
<accession>Q2Q5Y9</accession>
<feature type="chain" id="PRO_0000227973" description="Piwi-like protein 1">
    <location>
        <begin position="1"/>
        <end position="808"/>
    </location>
</feature>
<feature type="domain" description="PAZ" evidence="1">
    <location>
        <begin position="214"/>
        <end position="333"/>
    </location>
</feature>
<feature type="domain" description="Piwi" evidence="2">
    <location>
        <begin position="492"/>
        <end position="790"/>
    </location>
</feature>
<feature type="region of interest" description="Disordered" evidence="3">
    <location>
        <begin position="300"/>
        <end position="322"/>
    </location>
</feature>